<sequence length="155" mass="16272">MSTPTQSLQVKLLDPRFGDLWPLPAHATESSAGMDLRAALEAPMTLQPGDAALIPSGIAIHLADPQLCAVILPRSGLGHRHGIVLGNGTGLIDADYQGPLLISTWNRGREAFTIEPGDRIAQLVILPIVRAGLQVVDTFVDSARGAGGFGHTGVR</sequence>
<reference key="1">
    <citation type="journal article" date="2008" name="BMC Genomics">
        <title>Genome sequence and rapid evolution of the rice pathogen Xanthomonas oryzae pv. oryzae PXO99A.</title>
        <authorList>
            <person name="Salzberg S.L."/>
            <person name="Sommer D.D."/>
            <person name="Schatz M.C."/>
            <person name="Phillippy A.M."/>
            <person name="Rabinowicz P.D."/>
            <person name="Tsuge S."/>
            <person name="Furutani A."/>
            <person name="Ochiai H."/>
            <person name="Delcher A.L."/>
            <person name="Kelley D."/>
            <person name="Madupu R."/>
            <person name="Puiu D."/>
            <person name="Radune D."/>
            <person name="Shumway M."/>
            <person name="Trapnell C."/>
            <person name="Aparna G."/>
            <person name="Jha G."/>
            <person name="Pandey A."/>
            <person name="Patil P.B."/>
            <person name="Ishihara H."/>
            <person name="Meyer D.F."/>
            <person name="Szurek B."/>
            <person name="Verdier V."/>
            <person name="Koebnik R."/>
            <person name="Dow J.M."/>
            <person name="Ryan R.P."/>
            <person name="Hirata H."/>
            <person name="Tsuyumu S."/>
            <person name="Won Lee S."/>
            <person name="Seo Y.-S."/>
            <person name="Sriariyanum M."/>
            <person name="Ronald P.C."/>
            <person name="Sonti R.V."/>
            <person name="Van Sluys M.-A."/>
            <person name="Leach J.E."/>
            <person name="White F.F."/>
            <person name="Bogdanove A.J."/>
        </authorList>
    </citation>
    <scope>NUCLEOTIDE SEQUENCE [LARGE SCALE GENOMIC DNA]</scope>
    <source>
        <strain>PXO99A</strain>
    </source>
</reference>
<accession>B2SS19</accession>
<dbReference type="EC" id="3.6.1.23" evidence="1"/>
<dbReference type="EMBL" id="CP000967">
    <property type="protein sequence ID" value="ACD61294.1"/>
    <property type="molecule type" value="Genomic_DNA"/>
</dbReference>
<dbReference type="RefSeq" id="WP_011257425.1">
    <property type="nucleotide sequence ID" value="NC_010717.2"/>
</dbReference>
<dbReference type="SMR" id="B2SS19"/>
<dbReference type="KEGG" id="xop:PXO_02921"/>
<dbReference type="eggNOG" id="COG0756">
    <property type="taxonomic scope" value="Bacteria"/>
</dbReference>
<dbReference type="HOGENOM" id="CLU_068508_1_1_6"/>
<dbReference type="UniPathway" id="UPA00610">
    <property type="reaction ID" value="UER00666"/>
</dbReference>
<dbReference type="Proteomes" id="UP000001740">
    <property type="component" value="Chromosome"/>
</dbReference>
<dbReference type="GO" id="GO:0004170">
    <property type="term" value="F:dUTP diphosphatase activity"/>
    <property type="evidence" value="ECO:0007669"/>
    <property type="project" value="UniProtKB-UniRule"/>
</dbReference>
<dbReference type="GO" id="GO:0000287">
    <property type="term" value="F:magnesium ion binding"/>
    <property type="evidence" value="ECO:0007669"/>
    <property type="project" value="UniProtKB-UniRule"/>
</dbReference>
<dbReference type="GO" id="GO:0006226">
    <property type="term" value="P:dUMP biosynthetic process"/>
    <property type="evidence" value="ECO:0007669"/>
    <property type="project" value="UniProtKB-UniRule"/>
</dbReference>
<dbReference type="GO" id="GO:0046081">
    <property type="term" value="P:dUTP catabolic process"/>
    <property type="evidence" value="ECO:0007669"/>
    <property type="project" value="InterPro"/>
</dbReference>
<dbReference type="CDD" id="cd07557">
    <property type="entry name" value="trimeric_dUTPase"/>
    <property type="match status" value="1"/>
</dbReference>
<dbReference type="FunFam" id="2.70.40.10:FF:000002">
    <property type="entry name" value="dUTP diphosphatase"/>
    <property type="match status" value="1"/>
</dbReference>
<dbReference type="Gene3D" id="2.70.40.10">
    <property type="match status" value="1"/>
</dbReference>
<dbReference type="HAMAP" id="MF_00116">
    <property type="entry name" value="dUTPase_bact"/>
    <property type="match status" value="1"/>
</dbReference>
<dbReference type="InterPro" id="IPR008181">
    <property type="entry name" value="dUTPase"/>
</dbReference>
<dbReference type="InterPro" id="IPR029054">
    <property type="entry name" value="dUTPase-like"/>
</dbReference>
<dbReference type="InterPro" id="IPR036157">
    <property type="entry name" value="dUTPase-like_sf"/>
</dbReference>
<dbReference type="InterPro" id="IPR033704">
    <property type="entry name" value="dUTPase_trimeric"/>
</dbReference>
<dbReference type="NCBIfam" id="TIGR00576">
    <property type="entry name" value="dut"/>
    <property type="match status" value="1"/>
</dbReference>
<dbReference type="NCBIfam" id="NF001862">
    <property type="entry name" value="PRK00601.1"/>
    <property type="match status" value="1"/>
</dbReference>
<dbReference type="PANTHER" id="PTHR11241">
    <property type="entry name" value="DEOXYURIDINE 5'-TRIPHOSPHATE NUCLEOTIDOHYDROLASE"/>
    <property type="match status" value="1"/>
</dbReference>
<dbReference type="PANTHER" id="PTHR11241:SF0">
    <property type="entry name" value="DEOXYURIDINE 5'-TRIPHOSPHATE NUCLEOTIDOHYDROLASE"/>
    <property type="match status" value="1"/>
</dbReference>
<dbReference type="Pfam" id="PF00692">
    <property type="entry name" value="dUTPase"/>
    <property type="match status" value="1"/>
</dbReference>
<dbReference type="SUPFAM" id="SSF51283">
    <property type="entry name" value="dUTPase-like"/>
    <property type="match status" value="1"/>
</dbReference>
<feature type="chain" id="PRO_1000095002" description="Deoxyuridine 5'-triphosphate nucleotidohydrolase">
    <location>
        <begin position="1"/>
        <end position="155"/>
    </location>
</feature>
<feature type="binding site" evidence="1">
    <location>
        <begin position="74"/>
        <end position="76"/>
    </location>
    <ligand>
        <name>substrate</name>
    </ligand>
</feature>
<feature type="binding site" evidence="1">
    <location>
        <position position="87"/>
    </location>
    <ligand>
        <name>substrate</name>
    </ligand>
</feature>
<feature type="binding site" evidence="1">
    <location>
        <begin position="91"/>
        <end position="93"/>
    </location>
    <ligand>
        <name>substrate</name>
    </ligand>
</feature>
<evidence type="ECO:0000255" key="1">
    <source>
        <dbReference type="HAMAP-Rule" id="MF_00116"/>
    </source>
</evidence>
<protein>
    <recommendedName>
        <fullName evidence="1">Deoxyuridine 5'-triphosphate nucleotidohydrolase</fullName>
        <shortName evidence="1">dUTPase</shortName>
        <ecNumber evidence="1">3.6.1.23</ecNumber>
    </recommendedName>
    <alternativeName>
        <fullName evidence="1">dUTP pyrophosphatase</fullName>
    </alternativeName>
</protein>
<name>DUT_XANOP</name>
<gene>
    <name evidence="1" type="primary">dut</name>
    <name type="ordered locus">PXO_02921</name>
</gene>
<organism>
    <name type="scientific">Xanthomonas oryzae pv. oryzae (strain PXO99A)</name>
    <dbReference type="NCBI Taxonomy" id="360094"/>
    <lineage>
        <taxon>Bacteria</taxon>
        <taxon>Pseudomonadati</taxon>
        <taxon>Pseudomonadota</taxon>
        <taxon>Gammaproteobacteria</taxon>
        <taxon>Lysobacterales</taxon>
        <taxon>Lysobacteraceae</taxon>
        <taxon>Xanthomonas</taxon>
    </lineage>
</organism>
<proteinExistence type="inferred from homology"/>
<keyword id="KW-0378">Hydrolase</keyword>
<keyword id="KW-0460">Magnesium</keyword>
<keyword id="KW-0479">Metal-binding</keyword>
<keyword id="KW-0546">Nucleotide metabolism</keyword>
<comment type="function">
    <text evidence="1">This enzyme is involved in nucleotide metabolism: it produces dUMP, the immediate precursor of thymidine nucleotides and it decreases the intracellular concentration of dUTP so that uracil cannot be incorporated into DNA.</text>
</comment>
<comment type="catalytic activity">
    <reaction evidence="1">
        <text>dUTP + H2O = dUMP + diphosphate + H(+)</text>
        <dbReference type="Rhea" id="RHEA:10248"/>
        <dbReference type="ChEBI" id="CHEBI:15377"/>
        <dbReference type="ChEBI" id="CHEBI:15378"/>
        <dbReference type="ChEBI" id="CHEBI:33019"/>
        <dbReference type="ChEBI" id="CHEBI:61555"/>
        <dbReference type="ChEBI" id="CHEBI:246422"/>
        <dbReference type="EC" id="3.6.1.23"/>
    </reaction>
</comment>
<comment type="cofactor">
    <cofactor evidence="1">
        <name>Mg(2+)</name>
        <dbReference type="ChEBI" id="CHEBI:18420"/>
    </cofactor>
</comment>
<comment type="pathway">
    <text evidence="1">Pyrimidine metabolism; dUMP biosynthesis; dUMP from dCTP (dUTP route): step 2/2.</text>
</comment>
<comment type="similarity">
    <text evidence="1">Belongs to the dUTPase family.</text>
</comment>